<evidence type="ECO:0000255" key="1">
    <source>
        <dbReference type="HAMAP-Rule" id="MF_01052"/>
    </source>
</evidence>
<proteinExistence type="inferred from homology"/>
<protein>
    <recommendedName>
        <fullName evidence="1">Crotonobetainyl-CoA reductase</fullName>
        <ecNumber evidence="1">1.3.8.13</ecNumber>
    </recommendedName>
    <alternativeName>
        <fullName evidence="1">Crotonobetainyl-CoA dehydrogenase</fullName>
    </alternativeName>
</protein>
<name>CAIA_ECO7I</name>
<accession>B7NHE3</accession>
<sequence>MDFNLNDEQELFVAGIRELMASENWEAYFAECDRDSVYPERFVKALADMGIDSLLIPEEHGGLDAGFVTLAAVWMELGRLGAPTYVLYQLPGGFNTFLREGTQEQIDKIMAFRGTGKQMWNSAITEPGAGSDVGSLKTTYTRRNGKIYLNGSKCFITSSAYTPYIVVMARDGASPDKPVYTEWFVDMSKPGIKVTKLEKLGLRMDSCCEITFDDVELDEKDMFGREGNGFNRVKEEFDHERFLVALTNYGTAMCAFEDAARYANQRVQFGEAIGRFQLIQEKFAHMAIKLNSMKNMLYEAAWKADNGTITSGDAAMCKYFCANAAFEVVDSAMQVLGGVGIAGNHRISRFWRDLRVDRVSGGSDEMQILTLGRAVLKQYR</sequence>
<feature type="chain" id="PRO_1000136270" description="Crotonobetainyl-CoA reductase">
    <location>
        <begin position="1"/>
        <end position="380"/>
    </location>
</feature>
<keyword id="KW-0963">Cytoplasm</keyword>
<keyword id="KW-0274">FAD</keyword>
<keyword id="KW-0285">Flavoprotein</keyword>
<keyword id="KW-0560">Oxidoreductase</keyword>
<dbReference type="EC" id="1.3.8.13" evidence="1"/>
<dbReference type="EMBL" id="CU928164">
    <property type="protein sequence ID" value="CAR16181.1"/>
    <property type="molecule type" value="Genomic_DNA"/>
</dbReference>
<dbReference type="RefSeq" id="WP_000347117.1">
    <property type="nucleotide sequence ID" value="NC_011750.1"/>
</dbReference>
<dbReference type="RefSeq" id="YP_002406088.1">
    <property type="nucleotide sequence ID" value="NC_011750.1"/>
</dbReference>
<dbReference type="SMR" id="B7NHE3"/>
<dbReference type="STRING" id="585057.ECIAI39_0040"/>
<dbReference type="GeneID" id="93777396"/>
<dbReference type="KEGG" id="ect:ECIAI39_0040"/>
<dbReference type="PATRIC" id="fig|585057.6.peg.42"/>
<dbReference type="HOGENOM" id="CLU_018204_0_2_6"/>
<dbReference type="UniPathway" id="UPA00117"/>
<dbReference type="Proteomes" id="UP000000749">
    <property type="component" value="Chromosome"/>
</dbReference>
<dbReference type="GO" id="GO:0005737">
    <property type="term" value="C:cytoplasm"/>
    <property type="evidence" value="ECO:0007669"/>
    <property type="project" value="UniProtKB-SubCell"/>
</dbReference>
<dbReference type="GO" id="GO:0003995">
    <property type="term" value="F:acyl-CoA dehydrogenase activity"/>
    <property type="evidence" value="ECO:0007669"/>
    <property type="project" value="InterPro"/>
</dbReference>
<dbReference type="GO" id="GO:0050660">
    <property type="term" value="F:flavin adenine dinucleotide binding"/>
    <property type="evidence" value="ECO:0007669"/>
    <property type="project" value="InterPro"/>
</dbReference>
<dbReference type="GO" id="GO:0009437">
    <property type="term" value="P:carnitine metabolic process"/>
    <property type="evidence" value="ECO:0007669"/>
    <property type="project" value="UniProtKB-UniRule"/>
</dbReference>
<dbReference type="CDD" id="cd00567">
    <property type="entry name" value="ACAD"/>
    <property type="match status" value="1"/>
</dbReference>
<dbReference type="FunFam" id="1.20.140.10:FF:000001">
    <property type="entry name" value="Acyl-CoA dehydrogenase"/>
    <property type="match status" value="1"/>
</dbReference>
<dbReference type="FunFam" id="2.40.110.10:FF:000002">
    <property type="entry name" value="Acyl-CoA dehydrogenase fadE12"/>
    <property type="match status" value="1"/>
</dbReference>
<dbReference type="FunFam" id="1.10.540.10:FF:000005">
    <property type="entry name" value="Crotonobetainyl-CoA reductase"/>
    <property type="match status" value="1"/>
</dbReference>
<dbReference type="Gene3D" id="1.10.540.10">
    <property type="entry name" value="Acyl-CoA dehydrogenase/oxidase, N-terminal domain"/>
    <property type="match status" value="1"/>
</dbReference>
<dbReference type="Gene3D" id="2.40.110.10">
    <property type="entry name" value="Butyryl-CoA Dehydrogenase, subunit A, domain 2"/>
    <property type="match status" value="1"/>
</dbReference>
<dbReference type="Gene3D" id="1.20.140.10">
    <property type="entry name" value="Butyryl-CoA Dehydrogenase, subunit A, domain 3"/>
    <property type="match status" value="1"/>
</dbReference>
<dbReference type="HAMAP" id="MF_01052">
    <property type="entry name" value="CaiA"/>
    <property type="match status" value="1"/>
</dbReference>
<dbReference type="InterPro" id="IPR006089">
    <property type="entry name" value="Acyl-CoA_DH_CS"/>
</dbReference>
<dbReference type="InterPro" id="IPR006091">
    <property type="entry name" value="Acyl-CoA_Oxase/DH_mid-dom"/>
</dbReference>
<dbReference type="InterPro" id="IPR046373">
    <property type="entry name" value="Acyl-CoA_Oxase/DH_mid-dom_sf"/>
</dbReference>
<dbReference type="InterPro" id="IPR036250">
    <property type="entry name" value="AcylCo_DH-like_C"/>
</dbReference>
<dbReference type="InterPro" id="IPR009075">
    <property type="entry name" value="AcylCo_DH/oxidase_C"/>
</dbReference>
<dbReference type="InterPro" id="IPR013786">
    <property type="entry name" value="AcylCoA_DH/ox_N"/>
</dbReference>
<dbReference type="InterPro" id="IPR037069">
    <property type="entry name" value="AcylCoA_DH/ox_N_sf"/>
</dbReference>
<dbReference type="InterPro" id="IPR009100">
    <property type="entry name" value="AcylCoA_DH/oxidase_NM_dom_sf"/>
</dbReference>
<dbReference type="InterPro" id="IPR023450">
    <property type="entry name" value="CaiA"/>
</dbReference>
<dbReference type="NCBIfam" id="NF002885">
    <property type="entry name" value="PRK03354.1"/>
    <property type="match status" value="1"/>
</dbReference>
<dbReference type="PANTHER" id="PTHR43884">
    <property type="entry name" value="ACYL-COA DEHYDROGENASE"/>
    <property type="match status" value="1"/>
</dbReference>
<dbReference type="PANTHER" id="PTHR43884:SF12">
    <property type="entry name" value="ISOVALERYL-COA DEHYDROGENASE, MITOCHONDRIAL-RELATED"/>
    <property type="match status" value="1"/>
</dbReference>
<dbReference type="Pfam" id="PF00441">
    <property type="entry name" value="Acyl-CoA_dh_1"/>
    <property type="match status" value="1"/>
</dbReference>
<dbReference type="Pfam" id="PF02770">
    <property type="entry name" value="Acyl-CoA_dh_M"/>
    <property type="match status" value="1"/>
</dbReference>
<dbReference type="Pfam" id="PF02771">
    <property type="entry name" value="Acyl-CoA_dh_N"/>
    <property type="match status" value="1"/>
</dbReference>
<dbReference type="PIRSF" id="PIRSF016578">
    <property type="entry name" value="HsaA"/>
    <property type="match status" value="1"/>
</dbReference>
<dbReference type="SUPFAM" id="SSF47203">
    <property type="entry name" value="Acyl-CoA dehydrogenase C-terminal domain-like"/>
    <property type="match status" value="1"/>
</dbReference>
<dbReference type="SUPFAM" id="SSF56645">
    <property type="entry name" value="Acyl-CoA dehydrogenase NM domain-like"/>
    <property type="match status" value="1"/>
</dbReference>
<dbReference type="PROSITE" id="PS00072">
    <property type="entry name" value="ACYL_COA_DH_1"/>
    <property type="match status" value="1"/>
</dbReference>
<dbReference type="PROSITE" id="PS00073">
    <property type="entry name" value="ACYL_COA_DH_2"/>
    <property type="match status" value="1"/>
</dbReference>
<organism>
    <name type="scientific">Escherichia coli O7:K1 (strain IAI39 / ExPEC)</name>
    <dbReference type="NCBI Taxonomy" id="585057"/>
    <lineage>
        <taxon>Bacteria</taxon>
        <taxon>Pseudomonadati</taxon>
        <taxon>Pseudomonadota</taxon>
        <taxon>Gammaproteobacteria</taxon>
        <taxon>Enterobacterales</taxon>
        <taxon>Enterobacteriaceae</taxon>
        <taxon>Escherichia</taxon>
    </lineage>
</organism>
<gene>
    <name evidence="1" type="primary">caiA</name>
    <name type="ordered locus">ECIAI39_0040</name>
</gene>
<comment type="function">
    <text evidence="1">Catalyzes the reduction of crotonobetainyl-CoA to gamma-butyrobetainyl-CoA.</text>
</comment>
<comment type="catalytic activity">
    <reaction evidence="1">
        <text>4-(trimethylamino)butanoyl-CoA + oxidized [electron-transfer flavoprotein] + H(+) = crotonobetainyl-CoA + reduced [electron-transfer flavoprotein]</text>
        <dbReference type="Rhea" id="RHEA:51584"/>
        <dbReference type="Rhea" id="RHEA-COMP:10685"/>
        <dbReference type="Rhea" id="RHEA-COMP:10686"/>
        <dbReference type="ChEBI" id="CHEBI:15378"/>
        <dbReference type="ChEBI" id="CHEBI:57692"/>
        <dbReference type="ChEBI" id="CHEBI:58307"/>
        <dbReference type="ChEBI" id="CHEBI:60933"/>
        <dbReference type="ChEBI" id="CHEBI:61513"/>
        <dbReference type="EC" id="1.3.8.13"/>
    </reaction>
</comment>
<comment type="cofactor">
    <cofactor evidence="1">
        <name>FAD</name>
        <dbReference type="ChEBI" id="CHEBI:57692"/>
    </cofactor>
</comment>
<comment type="pathway">
    <text evidence="1">Amine and polyamine metabolism; carnitine metabolism.</text>
</comment>
<comment type="subunit">
    <text evidence="1">Homotetramer.</text>
</comment>
<comment type="subcellular location">
    <subcellularLocation>
        <location evidence="1">Cytoplasm</location>
    </subcellularLocation>
</comment>
<comment type="similarity">
    <text evidence="1">Belongs to the acyl-CoA dehydrogenase family.</text>
</comment>
<reference key="1">
    <citation type="journal article" date="2009" name="PLoS Genet.">
        <title>Organised genome dynamics in the Escherichia coli species results in highly diverse adaptive paths.</title>
        <authorList>
            <person name="Touchon M."/>
            <person name="Hoede C."/>
            <person name="Tenaillon O."/>
            <person name="Barbe V."/>
            <person name="Baeriswyl S."/>
            <person name="Bidet P."/>
            <person name="Bingen E."/>
            <person name="Bonacorsi S."/>
            <person name="Bouchier C."/>
            <person name="Bouvet O."/>
            <person name="Calteau A."/>
            <person name="Chiapello H."/>
            <person name="Clermont O."/>
            <person name="Cruveiller S."/>
            <person name="Danchin A."/>
            <person name="Diard M."/>
            <person name="Dossat C."/>
            <person name="Karoui M.E."/>
            <person name="Frapy E."/>
            <person name="Garry L."/>
            <person name="Ghigo J.M."/>
            <person name="Gilles A.M."/>
            <person name="Johnson J."/>
            <person name="Le Bouguenec C."/>
            <person name="Lescat M."/>
            <person name="Mangenot S."/>
            <person name="Martinez-Jehanne V."/>
            <person name="Matic I."/>
            <person name="Nassif X."/>
            <person name="Oztas S."/>
            <person name="Petit M.A."/>
            <person name="Pichon C."/>
            <person name="Rouy Z."/>
            <person name="Ruf C.S."/>
            <person name="Schneider D."/>
            <person name="Tourret J."/>
            <person name="Vacherie B."/>
            <person name="Vallenet D."/>
            <person name="Medigue C."/>
            <person name="Rocha E.P.C."/>
            <person name="Denamur E."/>
        </authorList>
    </citation>
    <scope>NUCLEOTIDE SEQUENCE [LARGE SCALE GENOMIC DNA]</scope>
    <source>
        <strain>IAI39 / ExPEC</strain>
    </source>
</reference>